<dbReference type="EMBL" id="BC105224">
    <property type="protein sequence ID" value="AAI05225.1"/>
    <property type="molecule type" value="mRNA"/>
</dbReference>
<dbReference type="RefSeq" id="NP_001030185.1">
    <property type="nucleotide sequence ID" value="NM_001035013.2"/>
</dbReference>
<dbReference type="RefSeq" id="XP_005213621.1">
    <property type="nucleotide sequence ID" value="XM_005213564.3"/>
</dbReference>
<dbReference type="RefSeq" id="XP_005213623.1">
    <property type="nucleotide sequence ID" value="XM_005213566.3"/>
</dbReference>
<dbReference type="RefSeq" id="XP_010808973.1">
    <property type="nucleotide sequence ID" value="XM_010810671.2"/>
</dbReference>
<dbReference type="RefSeq" id="XP_015329240.1">
    <property type="nucleotide sequence ID" value="XM_015473754.1"/>
</dbReference>
<dbReference type="RefSeq" id="XP_059747953.1">
    <property type="nucleotide sequence ID" value="XM_059891970.1"/>
</dbReference>
<dbReference type="SMR" id="Q3MHI7"/>
<dbReference type="FunCoup" id="Q3MHI7">
    <property type="interactions" value="2136"/>
</dbReference>
<dbReference type="STRING" id="9913.ENSBTAP00000072535"/>
<dbReference type="PaxDb" id="9913-ENSBTAP00000016261"/>
<dbReference type="GeneID" id="504754"/>
<dbReference type="KEGG" id="bta:504754"/>
<dbReference type="CTD" id="9617"/>
<dbReference type="VEuPathDB" id="HostDB:ENSBTAG00000012260"/>
<dbReference type="eggNOG" id="KOG2726">
    <property type="taxonomic scope" value="Eukaryota"/>
</dbReference>
<dbReference type="HOGENOM" id="CLU_036856_0_3_1"/>
<dbReference type="InParanoid" id="Q3MHI7"/>
<dbReference type="OMA" id="ECQQSRS"/>
<dbReference type="OrthoDB" id="2019491at2759"/>
<dbReference type="TreeFam" id="TF313720"/>
<dbReference type="Proteomes" id="UP000009136">
    <property type="component" value="Chromosome 12"/>
</dbReference>
<dbReference type="Bgee" id="ENSBTAG00000012260">
    <property type="expression patterns" value="Expressed in semen and 107 other cell types or tissues"/>
</dbReference>
<dbReference type="GO" id="GO:0005739">
    <property type="term" value="C:mitochondrion"/>
    <property type="evidence" value="ECO:0000250"/>
    <property type="project" value="UniProtKB"/>
</dbReference>
<dbReference type="GO" id="GO:0016149">
    <property type="term" value="F:translation release factor activity, codon specific"/>
    <property type="evidence" value="ECO:0000250"/>
    <property type="project" value="UniProtKB"/>
</dbReference>
<dbReference type="GO" id="GO:0070126">
    <property type="term" value="P:mitochondrial translational termination"/>
    <property type="evidence" value="ECO:0000250"/>
    <property type="project" value="UniProtKB"/>
</dbReference>
<dbReference type="FunFam" id="3.30.160.20:FF:000004">
    <property type="entry name" value="Peptide chain release factor 1"/>
    <property type="match status" value="1"/>
</dbReference>
<dbReference type="FunFam" id="3.30.70.1660:FF:000004">
    <property type="entry name" value="Peptide chain release factor 1"/>
    <property type="match status" value="1"/>
</dbReference>
<dbReference type="Gene3D" id="3.30.160.20">
    <property type="match status" value="1"/>
</dbReference>
<dbReference type="Gene3D" id="3.30.70.1660">
    <property type="match status" value="1"/>
</dbReference>
<dbReference type="Gene3D" id="6.10.140.1950">
    <property type="match status" value="1"/>
</dbReference>
<dbReference type="InterPro" id="IPR005139">
    <property type="entry name" value="PCRF"/>
</dbReference>
<dbReference type="InterPro" id="IPR000352">
    <property type="entry name" value="Pep_chain_release_fac_I"/>
</dbReference>
<dbReference type="InterPro" id="IPR045853">
    <property type="entry name" value="Pep_chain_release_fac_I_sf"/>
</dbReference>
<dbReference type="InterPro" id="IPR050057">
    <property type="entry name" value="Prokaryotic/Mito_RF"/>
</dbReference>
<dbReference type="PANTHER" id="PTHR43804">
    <property type="entry name" value="LD18447P"/>
    <property type="match status" value="1"/>
</dbReference>
<dbReference type="PANTHER" id="PTHR43804:SF1">
    <property type="entry name" value="PEPTIDE CHAIN RELEASE FACTOR 1, MITOCHONDRIAL"/>
    <property type="match status" value="1"/>
</dbReference>
<dbReference type="Pfam" id="PF03462">
    <property type="entry name" value="PCRF"/>
    <property type="match status" value="1"/>
</dbReference>
<dbReference type="Pfam" id="PF00472">
    <property type="entry name" value="RF-1"/>
    <property type="match status" value="1"/>
</dbReference>
<dbReference type="SMART" id="SM00937">
    <property type="entry name" value="PCRF"/>
    <property type="match status" value="1"/>
</dbReference>
<dbReference type="SUPFAM" id="SSF75620">
    <property type="entry name" value="Release factor"/>
    <property type="match status" value="1"/>
</dbReference>
<dbReference type="PROSITE" id="PS00745">
    <property type="entry name" value="RF_PROK_I"/>
    <property type="match status" value="1"/>
</dbReference>
<proteinExistence type="evidence at transcript level"/>
<evidence type="ECO:0000250" key="1">
    <source>
        <dbReference type="UniProtKB" id="O75570"/>
    </source>
</evidence>
<evidence type="ECO:0000250" key="2">
    <source>
        <dbReference type="UniProtKB" id="Q80VP5"/>
    </source>
</evidence>
<evidence type="ECO:0000250" key="3">
    <source>
        <dbReference type="UniProtKB" id="Q9H3J6"/>
    </source>
</evidence>
<evidence type="ECO:0000255" key="4"/>
<evidence type="ECO:0000305" key="5"/>
<name>RF1M_BOVIN</name>
<keyword id="KW-0488">Methylation</keyword>
<keyword id="KW-0496">Mitochondrion</keyword>
<keyword id="KW-0648">Protein biosynthesis</keyword>
<keyword id="KW-1185">Reference proteome</keyword>
<keyword id="KW-0809">Transit peptide</keyword>
<organism>
    <name type="scientific">Bos taurus</name>
    <name type="common">Bovine</name>
    <dbReference type="NCBI Taxonomy" id="9913"/>
    <lineage>
        <taxon>Eukaryota</taxon>
        <taxon>Metazoa</taxon>
        <taxon>Chordata</taxon>
        <taxon>Craniata</taxon>
        <taxon>Vertebrata</taxon>
        <taxon>Euteleostomi</taxon>
        <taxon>Mammalia</taxon>
        <taxon>Eutheria</taxon>
        <taxon>Laurasiatheria</taxon>
        <taxon>Artiodactyla</taxon>
        <taxon>Ruminantia</taxon>
        <taxon>Pecora</taxon>
        <taxon>Bovidae</taxon>
        <taxon>Bovinae</taxon>
        <taxon>Bos</taxon>
    </lineage>
</organism>
<feature type="transit peptide" description="Mitochondrion" evidence="4">
    <location>
        <begin position="1"/>
        <end position="63"/>
    </location>
</feature>
<feature type="chain" id="PRO_0000261001" description="Peptide chain release factor 1, mitochondrial">
    <location>
        <begin position="64"/>
        <end position="447"/>
    </location>
</feature>
<feature type="region of interest" description="GGQ domain" evidence="2">
    <location>
        <begin position="299"/>
        <end position="363"/>
    </location>
</feature>
<feature type="short sequence motif" description="GGQ" evidence="1">
    <location>
        <begin position="313"/>
        <end position="315"/>
    </location>
</feature>
<feature type="modified residue" description="N5-methylglutamine" evidence="1">
    <location>
        <position position="315"/>
    </location>
</feature>
<accession>Q3MHI7</accession>
<sequence>MNRRHLFAWLFRHLSLNGHLQCHVHRHSHQLTQIPLDTRLWVFRRNRNHTVHRLLNKNCSRRYCHQDTSMLWKHKALQKYMEDLNKEYQTLDHCLHHISASEGDRRSLTRRHAELAPLAVIYKEIQEAEQAIEELESMCKSLNKQDEKQLQELALEERQTIAQKINMLYSELFQSLLPKEKYDKNDVILEVTSGRTTGGDICQQFTREIFDMYQNYSSYKHWRFELLNYTPADYGGLHHAAARISGDNVYKHLKYEGGIHRVQRIPEVGLSSRMQRIHTGTMSVIVLPHPDEVDVKVDPKDLRIDTFRAKGAGGQHVNTTDSAVRLVHIPTGLVVECQQERSQIKNKEIALRVLRARLYQQIIEKDKCQQRSARKLQVGTRAQSERIRTYNFTQDRVTDHRIAYEVRNIKEFLCGEKCLDQLIQRLLQSADEEAITEFLDENLKSVK</sequence>
<reference key="1">
    <citation type="submission" date="2005-09" db="EMBL/GenBank/DDBJ databases">
        <authorList>
            <consortium name="NIH - Mammalian Gene Collection (MGC) project"/>
        </authorList>
    </citation>
    <scope>NUCLEOTIDE SEQUENCE [LARGE SCALE MRNA]</scope>
    <source>
        <strain>Hereford</strain>
        <tissue>Fetal liver</tissue>
    </source>
</reference>
<protein>
    <recommendedName>
        <fullName>Peptide chain release factor 1, mitochondrial</fullName>
        <shortName>MRF-1</shortName>
        <shortName>MtRF-1</shortName>
    </recommendedName>
</protein>
<comment type="function">
    <text evidence="1">Mitochondrial peptide chain release factor that directs the termination of translation in response to the peptide chain non-canonical stop codons AGG and AGA. Non-canonical termination codons AGG and AGA are found at the end of MT-CO1/COX1 and MT-ND6/ND6 open reading frames, respectively. Recognizes non-canonical stop codons via a network of interactions between the codon, MTRF1 and the ribosomal RNA (rRNA): in contrast to other translation release factors, which identify the codon in the A-site via direct interactions of amino acid side chains with the bases, MTRF1 repositions the first 2 bases of the stop codon to use an intricate network of interactions that includes residues of the release factor, the rRNA of the small ribosomal subunit, as well as neighboring bases of the mRNA.</text>
</comment>
<comment type="subcellular location">
    <subcellularLocation>
        <location evidence="1">Mitochondrion</location>
    </subcellularLocation>
</comment>
<comment type="domain">
    <text evidence="3">The GGQ domain interacts with the peptidyltransferase center (PTC) of the large ribosomal subunit to trigger nascent chain hydrolysis.</text>
</comment>
<comment type="PTM">
    <text evidence="1">Methylation of glutamine in the GGQ triplet by HEMK1 is conserved from bacteria to mammals.</text>
</comment>
<comment type="similarity">
    <text evidence="5">Belongs to the prokaryotic/mitochondrial release factor family.</text>
</comment>
<gene>
    <name type="primary">MTRF1</name>
</gene>